<name>SWT6B_ORYSI</name>
<protein>
    <recommendedName>
        <fullName>Bidirectional sugar transporter SWEET6b</fullName>
        <shortName>OsSWEET6b</shortName>
    </recommendedName>
</protein>
<accession>A2WSD3</accession>
<proteinExistence type="inferred from homology"/>
<reference key="1">
    <citation type="journal article" date="2005" name="PLoS Biol.">
        <title>The genomes of Oryza sativa: a history of duplications.</title>
        <authorList>
            <person name="Yu J."/>
            <person name="Wang J."/>
            <person name="Lin W."/>
            <person name="Li S."/>
            <person name="Li H."/>
            <person name="Zhou J."/>
            <person name="Ni P."/>
            <person name="Dong W."/>
            <person name="Hu S."/>
            <person name="Zeng C."/>
            <person name="Zhang J."/>
            <person name="Zhang Y."/>
            <person name="Li R."/>
            <person name="Xu Z."/>
            <person name="Li S."/>
            <person name="Li X."/>
            <person name="Zheng H."/>
            <person name="Cong L."/>
            <person name="Lin L."/>
            <person name="Yin J."/>
            <person name="Geng J."/>
            <person name="Li G."/>
            <person name="Shi J."/>
            <person name="Liu J."/>
            <person name="Lv H."/>
            <person name="Li J."/>
            <person name="Wang J."/>
            <person name="Deng Y."/>
            <person name="Ran L."/>
            <person name="Shi X."/>
            <person name="Wang X."/>
            <person name="Wu Q."/>
            <person name="Li C."/>
            <person name="Ren X."/>
            <person name="Wang J."/>
            <person name="Wang X."/>
            <person name="Li D."/>
            <person name="Liu D."/>
            <person name="Zhang X."/>
            <person name="Ji Z."/>
            <person name="Zhao W."/>
            <person name="Sun Y."/>
            <person name="Zhang Z."/>
            <person name="Bao J."/>
            <person name="Han Y."/>
            <person name="Dong L."/>
            <person name="Ji J."/>
            <person name="Chen P."/>
            <person name="Wu S."/>
            <person name="Liu J."/>
            <person name="Xiao Y."/>
            <person name="Bu D."/>
            <person name="Tan J."/>
            <person name="Yang L."/>
            <person name="Ye C."/>
            <person name="Zhang J."/>
            <person name="Xu J."/>
            <person name="Zhou Y."/>
            <person name="Yu Y."/>
            <person name="Zhang B."/>
            <person name="Zhuang S."/>
            <person name="Wei H."/>
            <person name="Liu B."/>
            <person name="Lei M."/>
            <person name="Yu H."/>
            <person name="Li Y."/>
            <person name="Xu H."/>
            <person name="Wei S."/>
            <person name="He X."/>
            <person name="Fang L."/>
            <person name="Zhang Z."/>
            <person name="Zhang Y."/>
            <person name="Huang X."/>
            <person name="Su Z."/>
            <person name="Tong W."/>
            <person name="Li J."/>
            <person name="Tong Z."/>
            <person name="Li S."/>
            <person name="Ye J."/>
            <person name="Wang L."/>
            <person name="Fang L."/>
            <person name="Lei T."/>
            <person name="Chen C.-S."/>
            <person name="Chen H.-C."/>
            <person name="Xu Z."/>
            <person name="Li H."/>
            <person name="Huang H."/>
            <person name="Zhang F."/>
            <person name="Xu H."/>
            <person name="Li N."/>
            <person name="Zhao C."/>
            <person name="Li S."/>
            <person name="Dong L."/>
            <person name="Huang Y."/>
            <person name="Li L."/>
            <person name="Xi Y."/>
            <person name="Qi Q."/>
            <person name="Li W."/>
            <person name="Zhang B."/>
            <person name="Hu W."/>
            <person name="Zhang Y."/>
            <person name="Tian X."/>
            <person name="Jiao Y."/>
            <person name="Liang X."/>
            <person name="Jin J."/>
            <person name="Gao L."/>
            <person name="Zheng W."/>
            <person name="Hao B."/>
            <person name="Liu S.-M."/>
            <person name="Wang W."/>
            <person name="Yuan L."/>
            <person name="Cao M."/>
            <person name="McDermott J."/>
            <person name="Samudrala R."/>
            <person name="Wang J."/>
            <person name="Wong G.K.-S."/>
            <person name="Yang H."/>
        </authorList>
    </citation>
    <scope>NUCLEOTIDE SEQUENCE [LARGE SCALE GENOMIC DNA]</scope>
    <source>
        <strain>cv. 93-11</strain>
    </source>
</reference>
<organism>
    <name type="scientific">Oryza sativa subsp. indica</name>
    <name type="common">Rice</name>
    <dbReference type="NCBI Taxonomy" id="39946"/>
    <lineage>
        <taxon>Eukaryota</taxon>
        <taxon>Viridiplantae</taxon>
        <taxon>Streptophyta</taxon>
        <taxon>Embryophyta</taxon>
        <taxon>Tracheophyta</taxon>
        <taxon>Spermatophyta</taxon>
        <taxon>Magnoliopsida</taxon>
        <taxon>Liliopsida</taxon>
        <taxon>Poales</taxon>
        <taxon>Poaceae</taxon>
        <taxon>BOP clade</taxon>
        <taxon>Oryzoideae</taxon>
        <taxon>Oryzeae</taxon>
        <taxon>Oryzinae</taxon>
        <taxon>Oryza</taxon>
        <taxon>Oryza sativa</taxon>
    </lineage>
</organism>
<dbReference type="EMBL" id="CM000126">
    <property type="protein sequence ID" value="EAY74879.1"/>
    <property type="molecule type" value="Genomic_DNA"/>
</dbReference>
<dbReference type="SMR" id="A2WSD3"/>
<dbReference type="STRING" id="39946.A2WSD3"/>
<dbReference type="EnsemblPlants" id="BGIOSGA003948-TA">
    <property type="protein sequence ID" value="BGIOSGA003948-PA"/>
    <property type="gene ID" value="BGIOSGA003948"/>
</dbReference>
<dbReference type="Gramene" id="BGIOSGA003948-TA">
    <property type="protein sequence ID" value="BGIOSGA003948-PA"/>
    <property type="gene ID" value="BGIOSGA003948"/>
</dbReference>
<dbReference type="HOGENOM" id="CLU_048643_1_0_1"/>
<dbReference type="OMA" id="LGAHTHK"/>
<dbReference type="Proteomes" id="UP000007015">
    <property type="component" value="Chromosome 1"/>
</dbReference>
<dbReference type="GO" id="GO:0005886">
    <property type="term" value="C:plasma membrane"/>
    <property type="evidence" value="ECO:0000250"/>
    <property type="project" value="UniProtKB"/>
</dbReference>
<dbReference type="GO" id="GO:0051119">
    <property type="term" value="F:sugar transmembrane transporter activity"/>
    <property type="evidence" value="ECO:0000250"/>
    <property type="project" value="UniProtKB"/>
</dbReference>
<dbReference type="FunFam" id="1.20.1280.290:FF:000001">
    <property type="entry name" value="Bidirectional sugar transporter SWEET"/>
    <property type="match status" value="1"/>
</dbReference>
<dbReference type="FunFam" id="1.20.1280.290:FF:000002">
    <property type="entry name" value="Bidirectional sugar transporter SWEET"/>
    <property type="match status" value="1"/>
</dbReference>
<dbReference type="Gene3D" id="1.20.1280.290">
    <property type="match status" value="2"/>
</dbReference>
<dbReference type="InterPro" id="IPR047664">
    <property type="entry name" value="SWEET"/>
</dbReference>
<dbReference type="InterPro" id="IPR004316">
    <property type="entry name" value="SWEET_rpt"/>
</dbReference>
<dbReference type="PANTHER" id="PTHR10791">
    <property type="entry name" value="RAG1-ACTIVATING PROTEIN 1"/>
    <property type="match status" value="1"/>
</dbReference>
<dbReference type="PANTHER" id="PTHR10791:SF30">
    <property type="entry name" value="SUGAR TRANSPORTER SWEET1"/>
    <property type="match status" value="1"/>
</dbReference>
<dbReference type="Pfam" id="PF03083">
    <property type="entry name" value="MtN3_slv"/>
    <property type="match status" value="2"/>
</dbReference>
<keyword id="KW-1003">Cell membrane</keyword>
<keyword id="KW-0472">Membrane</keyword>
<keyword id="KW-1185">Reference proteome</keyword>
<keyword id="KW-0677">Repeat</keyword>
<keyword id="KW-0762">Sugar transport</keyword>
<keyword id="KW-0812">Transmembrane</keyword>
<keyword id="KW-1133">Transmembrane helix</keyword>
<keyword id="KW-0813">Transport</keyword>
<gene>
    <name type="primary">SWEET6B</name>
    <name type="ORF">OsI_02768</name>
</gene>
<sequence>MISPDAARNVVGIIGNVISFGLFLAPVPTFWRICKRKDVEEFKADPYLATLLNCMLWVFYGIPIVHPNSILVVTINGIGLVVEGTYLFIFFLYSPNKKRLRMLAVLGVELVFMLAVILGVLLGAHTHKKRSMIVGILCVFFGSIMYFSPLTIMGKVIKTKSVEYMPFFLSLVCFLNGVCWTAYALIRFDIYVTIPNSLGAIFGAIQLILYACYYRTTPKKTKAAKDVEMPSVISGPGAAATASGGSVVSVTVER</sequence>
<comment type="function">
    <text evidence="1">Mediates both low-affinity uptake and efflux of sugar across the plasma membrane.</text>
</comment>
<comment type="subunit">
    <text evidence="1">Forms homooligomers and/or heterooligomers.</text>
</comment>
<comment type="subcellular location">
    <subcellularLocation>
        <location evidence="1">Cell membrane</location>
        <topology evidence="1">Multi-pass membrane protein</topology>
    </subcellularLocation>
</comment>
<comment type="similarity">
    <text evidence="3">Belongs to the SWEET sugar transporter family.</text>
</comment>
<evidence type="ECO:0000250" key="1">
    <source>
        <dbReference type="UniProtKB" id="Q8L9J7"/>
    </source>
</evidence>
<evidence type="ECO:0000255" key="2"/>
<evidence type="ECO:0000305" key="3"/>
<feature type="chain" id="PRO_0000404144" description="Bidirectional sugar transporter SWEET6b">
    <location>
        <begin position="1"/>
        <end position="254"/>
    </location>
</feature>
<feature type="topological domain" description="Extracellular" evidence="2">
    <location>
        <begin position="1"/>
        <end position="9"/>
    </location>
</feature>
<feature type="transmembrane region" description="Helical; Name=1" evidence="2">
    <location>
        <begin position="10"/>
        <end position="30"/>
    </location>
</feature>
<feature type="topological domain" description="Cytoplasmic" evidence="2">
    <location>
        <begin position="31"/>
        <end position="45"/>
    </location>
</feature>
<feature type="transmembrane region" description="Helical; Name=2" evidence="2">
    <location>
        <begin position="46"/>
        <end position="66"/>
    </location>
</feature>
<feature type="topological domain" description="Extracellular" evidence="2">
    <location>
        <begin position="67"/>
        <end position="69"/>
    </location>
</feature>
<feature type="transmembrane region" description="Helical; Name=3" evidence="2">
    <location>
        <begin position="70"/>
        <end position="90"/>
    </location>
</feature>
<feature type="topological domain" description="Cytoplasmic" evidence="2">
    <location>
        <begin position="91"/>
        <end position="101"/>
    </location>
</feature>
<feature type="transmembrane region" description="Helical; Name=4" evidence="2">
    <location>
        <begin position="102"/>
        <end position="122"/>
    </location>
</feature>
<feature type="topological domain" description="Extracellular" evidence="2">
    <location>
        <begin position="123"/>
        <end position="131"/>
    </location>
</feature>
<feature type="transmembrane region" description="Helical; Name=5" evidence="2">
    <location>
        <begin position="132"/>
        <end position="152"/>
    </location>
</feature>
<feature type="topological domain" description="Cytoplasmic" evidence="2">
    <location>
        <begin position="153"/>
        <end position="165"/>
    </location>
</feature>
<feature type="transmembrane region" description="Helical; Name=6" evidence="2">
    <location>
        <begin position="166"/>
        <end position="186"/>
    </location>
</feature>
<feature type="topological domain" description="Extracellular" evidence="2">
    <location>
        <begin position="187"/>
        <end position="189"/>
    </location>
</feature>
<feature type="transmembrane region" description="Helical; Name=7" evidence="2">
    <location>
        <begin position="190"/>
        <end position="210"/>
    </location>
</feature>
<feature type="topological domain" description="Cytoplasmic" evidence="2">
    <location>
        <begin position="211"/>
        <end position="254"/>
    </location>
</feature>
<feature type="domain" description="MtN3/slv 1">
    <location>
        <begin position="10"/>
        <end position="98"/>
    </location>
</feature>
<feature type="domain" description="MtN3/slv 2">
    <location>
        <begin position="133"/>
        <end position="216"/>
    </location>
</feature>